<reference key="1">
    <citation type="journal article" date="1979" name="Experientia">
        <title>Amino acid composition and sequence of crinia-angiotensin, an angiotensin II-like endecapeptide from the skin of the Australian frog Crinia georgiana.</title>
        <authorList>
            <person name="Erspamer V."/>
            <person name="Melchiorri P."/>
            <person name="Nakajima T."/>
            <person name="Yasuhara T."/>
            <person name="Endean R."/>
        </authorList>
    </citation>
    <scope>PROTEIN SEQUENCE</scope>
    <source>
        <tissue>Skin secretion</tissue>
    </source>
</reference>
<keyword id="KW-0903">Direct protein sequencing</keyword>
<keyword id="KW-0964">Secreted</keyword>
<keyword id="KW-0838">Vasoactive</keyword>
<keyword id="KW-0839">Vasoconstrictor</keyword>
<feature type="peptide" id="PRO_0000044107" description="Crinia-angiotensin-2">
    <location>
        <begin position="1"/>
        <end position="11"/>
    </location>
</feature>
<dbReference type="PIR" id="S07207">
    <property type="entry name" value="S07207"/>
</dbReference>
<dbReference type="GO" id="GO:0005576">
    <property type="term" value="C:extracellular region"/>
    <property type="evidence" value="ECO:0007669"/>
    <property type="project" value="UniProtKB-SubCell"/>
</dbReference>
<dbReference type="GO" id="GO:0042310">
    <property type="term" value="P:vasoconstriction"/>
    <property type="evidence" value="ECO:0007669"/>
    <property type="project" value="UniProtKB-KW"/>
</dbReference>
<protein>
    <recommendedName>
        <fullName>Crinia-angiotensin-2</fullName>
    </recommendedName>
    <alternativeName>
        <fullName>Crinia-angiotensin II</fullName>
    </alternativeName>
</protein>
<sequence length="11" mass="1271">APGDRIYVHPF</sequence>
<organism>
    <name type="scientific">Crinia georgiana</name>
    <name type="common">Quacking frog</name>
    <dbReference type="NCBI Taxonomy" id="8374"/>
    <lineage>
        <taxon>Eukaryota</taxon>
        <taxon>Metazoa</taxon>
        <taxon>Chordata</taxon>
        <taxon>Craniata</taxon>
        <taxon>Vertebrata</taxon>
        <taxon>Euteleostomi</taxon>
        <taxon>Amphibia</taxon>
        <taxon>Batrachia</taxon>
        <taxon>Anura</taxon>
        <taxon>Neobatrachia</taxon>
        <taxon>Myobatrachoidea</taxon>
        <taxon>Myobatrachidae</taxon>
        <taxon>Myobatrachinae</taxon>
        <taxon>Crinia</taxon>
    </lineage>
</organism>
<accession>P09037</accession>
<name>ANGT_CRIGE</name>
<proteinExistence type="evidence at protein level"/>
<comment type="subcellular location">
    <subcellularLocation>
        <location>Secreted</location>
    </subcellularLocation>
</comment>
<comment type="tissue specificity">
    <text>Skin.</text>
</comment>